<accession>Q8P4S7</accession>
<proteinExistence type="inferred from homology"/>
<dbReference type="EC" id="7.4.2.11" evidence="1"/>
<dbReference type="EMBL" id="AE008922">
    <property type="protein sequence ID" value="AAM42900.1"/>
    <property type="molecule type" value="Genomic_DNA"/>
</dbReference>
<dbReference type="RefSeq" id="NP_638976.1">
    <property type="nucleotide sequence ID" value="NC_003902.1"/>
</dbReference>
<dbReference type="RefSeq" id="WP_011038713.1">
    <property type="nucleotide sequence ID" value="NC_003902.1"/>
</dbReference>
<dbReference type="SMR" id="Q8P4S7"/>
<dbReference type="STRING" id="190485.XCC3630"/>
<dbReference type="EnsemblBacteria" id="AAM42900">
    <property type="protein sequence ID" value="AAM42900"/>
    <property type="gene ID" value="XCC3630"/>
</dbReference>
<dbReference type="KEGG" id="xcc:XCC3630"/>
<dbReference type="PATRIC" id="fig|190485.4.peg.3889"/>
<dbReference type="eggNOG" id="COG1135">
    <property type="taxonomic scope" value="Bacteria"/>
</dbReference>
<dbReference type="HOGENOM" id="CLU_000604_1_3_6"/>
<dbReference type="OrthoDB" id="9802264at2"/>
<dbReference type="Proteomes" id="UP000001010">
    <property type="component" value="Chromosome"/>
</dbReference>
<dbReference type="GO" id="GO:0005886">
    <property type="term" value="C:plasma membrane"/>
    <property type="evidence" value="ECO:0007669"/>
    <property type="project" value="UniProtKB-SubCell"/>
</dbReference>
<dbReference type="GO" id="GO:0033232">
    <property type="term" value="F:ABC-type D-methionine transporter activity"/>
    <property type="evidence" value="ECO:0007669"/>
    <property type="project" value="UniProtKB-EC"/>
</dbReference>
<dbReference type="GO" id="GO:0005524">
    <property type="term" value="F:ATP binding"/>
    <property type="evidence" value="ECO:0007669"/>
    <property type="project" value="UniProtKB-KW"/>
</dbReference>
<dbReference type="GO" id="GO:0016887">
    <property type="term" value="F:ATP hydrolysis activity"/>
    <property type="evidence" value="ECO:0007669"/>
    <property type="project" value="InterPro"/>
</dbReference>
<dbReference type="CDD" id="cd03258">
    <property type="entry name" value="ABC_MetN_methionine_transporter"/>
    <property type="match status" value="1"/>
</dbReference>
<dbReference type="FunFam" id="3.40.50.300:FF:000056">
    <property type="entry name" value="Cell division ATP-binding protein FtsE"/>
    <property type="match status" value="1"/>
</dbReference>
<dbReference type="Gene3D" id="3.30.70.260">
    <property type="match status" value="1"/>
</dbReference>
<dbReference type="Gene3D" id="3.40.50.300">
    <property type="entry name" value="P-loop containing nucleotide triphosphate hydrolases"/>
    <property type="match status" value="1"/>
</dbReference>
<dbReference type="InterPro" id="IPR003593">
    <property type="entry name" value="AAA+_ATPase"/>
</dbReference>
<dbReference type="InterPro" id="IPR003439">
    <property type="entry name" value="ABC_transporter-like_ATP-bd"/>
</dbReference>
<dbReference type="InterPro" id="IPR017871">
    <property type="entry name" value="ABC_transporter-like_CS"/>
</dbReference>
<dbReference type="InterPro" id="IPR045865">
    <property type="entry name" value="ACT-like_dom_sf"/>
</dbReference>
<dbReference type="InterPro" id="IPR041701">
    <property type="entry name" value="MetN_ABC"/>
</dbReference>
<dbReference type="InterPro" id="IPR050086">
    <property type="entry name" value="MetN_ABC_transporter-like"/>
</dbReference>
<dbReference type="InterPro" id="IPR018449">
    <property type="entry name" value="NIL_domain"/>
</dbReference>
<dbReference type="InterPro" id="IPR027417">
    <property type="entry name" value="P-loop_NTPase"/>
</dbReference>
<dbReference type="PANTHER" id="PTHR43166">
    <property type="entry name" value="AMINO ACID IMPORT ATP-BINDING PROTEIN"/>
    <property type="match status" value="1"/>
</dbReference>
<dbReference type="PANTHER" id="PTHR43166:SF30">
    <property type="entry name" value="METHIONINE IMPORT ATP-BINDING PROTEIN METN"/>
    <property type="match status" value="1"/>
</dbReference>
<dbReference type="Pfam" id="PF00005">
    <property type="entry name" value="ABC_tran"/>
    <property type="match status" value="1"/>
</dbReference>
<dbReference type="Pfam" id="PF09383">
    <property type="entry name" value="NIL"/>
    <property type="match status" value="1"/>
</dbReference>
<dbReference type="SMART" id="SM00382">
    <property type="entry name" value="AAA"/>
    <property type="match status" value="1"/>
</dbReference>
<dbReference type="SMART" id="SM00930">
    <property type="entry name" value="NIL"/>
    <property type="match status" value="1"/>
</dbReference>
<dbReference type="SUPFAM" id="SSF55021">
    <property type="entry name" value="ACT-like"/>
    <property type="match status" value="1"/>
</dbReference>
<dbReference type="SUPFAM" id="SSF52540">
    <property type="entry name" value="P-loop containing nucleoside triphosphate hydrolases"/>
    <property type="match status" value="1"/>
</dbReference>
<dbReference type="PROSITE" id="PS00211">
    <property type="entry name" value="ABC_TRANSPORTER_1"/>
    <property type="match status" value="1"/>
</dbReference>
<dbReference type="PROSITE" id="PS50893">
    <property type="entry name" value="ABC_TRANSPORTER_2"/>
    <property type="match status" value="1"/>
</dbReference>
<dbReference type="PROSITE" id="PS51264">
    <property type="entry name" value="METN"/>
    <property type="match status" value="1"/>
</dbReference>
<evidence type="ECO:0000255" key="1">
    <source>
        <dbReference type="HAMAP-Rule" id="MF_01719"/>
    </source>
</evidence>
<organism>
    <name type="scientific">Xanthomonas campestris pv. campestris (strain ATCC 33913 / DSM 3586 / NCPPB 528 / LMG 568 / P 25)</name>
    <dbReference type="NCBI Taxonomy" id="190485"/>
    <lineage>
        <taxon>Bacteria</taxon>
        <taxon>Pseudomonadati</taxon>
        <taxon>Pseudomonadota</taxon>
        <taxon>Gammaproteobacteria</taxon>
        <taxon>Lysobacterales</taxon>
        <taxon>Lysobacteraceae</taxon>
        <taxon>Xanthomonas</taxon>
    </lineage>
</organism>
<keyword id="KW-0029">Amino-acid transport</keyword>
<keyword id="KW-0067">ATP-binding</keyword>
<keyword id="KW-0997">Cell inner membrane</keyword>
<keyword id="KW-1003">Cell membrane</keyword>
<keyword id="KW-0472">Membrane</keyword>
<keyword id="KW-0547">Nucleotide-binding</keyword>
<keyword id="KW-1185">Reference proteome</keyword>
<keyword id="KW-1278">Translocase</keyword>
<keyword id="KW-0813">Transport</keyword>
<name>METN_XANCP</name>
<protein>
    <recommendedName>
        <fullName evidence="1">Methionine import ATP-binding protein MetN</fullName>
        <ecNumber evidence="1">7.4.2.11</ecNumber>
    </recommendedName>
</protein>
<gene>
    <name evidence="1" type="primary">metN</name>
    <name type="ordered locus">XCC3630</name>
</gene>
<comment type="function">
    <text evidence="1">Part of the ABC transporter complex MetNIQ involved in methionine import. Responsible for energy coupling to the transport system.</text>
</comment>
<comment type="catalytic activity">
    <reaction evidence="1">
        <text>L-methionine(out) + ATP + H2O = L-methionine(in) + ADP + phosphate + H(+)</text>
        <dbReference type="Rhea" id="RHEA:29779"/>
        <dbReference type="ChEBI" id="CHEBI:15377"/>
        <dbReference type="ChEBI" id="CHEBI:15378"/>
        <dbReference type="ChEBI" id="CHEBI:30616"/>
        <dbReference type="ChEBI" id="CHEBI:43474"/>
        <dbReference type="ChEBI" id="CHEBI:57844"/>
        <dbReference type="ChEBI" id="CHEBI:456216"/>
        <dbReference type="EC" id="7.4.2.11"/>
    </reaction>
</comment>
<comment type="catalytic activity">
    <reaction evidence="1">
        <text>D-methionine(out) + ATP + H2O = D-methionine(in) + ADP + phosphate + H(+)</text>
        <dbReference type="Rhea" id="RHEA:29767"/>
        <dbReference type="ChEBI" id="CHEBI:15377"/>
        <dbReference type="ChEBI" id="CHEBI:15378"/>
        <dbReference type="ChEBI" id="CHEBI:30616"/>
        <dbReference type="ChEBI" id="CHEBI:43474"/>
        <dbReference type="ChEBI" id="CHEBI:57932"/>
        <dbReference type="ChEBI" id="CHEBI:456216"/>
        <dbReference type="EC" id="7.4.2.11"/>
    </reaction>
</comment>
<comment type="subunit">
    <text evidence="1">The complex is composed of two ATP-binding proteins (MetN), two transmembrane proteins (MetI) and a solute-binding protein (MetQ).</text>
</comment>
<comment type="subcellular location">
    <subcellularLocation>
        <location evidence="1">Cell inner membrane</location>
        <topology evidence="1">Peripheral membrane protein</topology>
    </subcellularLocation>
</comment>
<comment type="similarity">
    <text evidence="1">Belongs to the ABC transporter superfamily. Methionine importer (TC 3.A.1.24) family.</text>
</comment>
<reference key="1">
    <citation type="journal article" date="2002" name="Nature">
        <title>Comparison of the genomes of two Xanthomonas pathogens with differing host specificities.</title>
        <authorList>
            <person name="da Silva A.C.R."/>
            <person name="Ferro J.A."/>
            <person name="Reinach F.C."/>
            <person name="Farah C.S."/>
            <person name="Furlan L.R."/>
            <person name="Quaggio R.B."/>
            <person name="Monteiro-Vitorello C.B."/>
            <person name="Van Sluys M.A."/>
            <person name="Almeida N.F. Jr."/>
            <person name="Alves L.M.C."/>
            <person name="do Amaral A.M."/>
            <person name="Bertolini M.C."/>
            <person name="Camargo L.E.A."/>
            <person name="Camarotte G."/>
            <person name="Cannavan F."/>
            <person name="Cardozo J."/>
            <person name="Chambergo F."/>
            <person name="Ciapina L.P."/>
            <person name="Cicarelli R.M.B."/>
            <person name="Coutinho L.L."/>
            <person name="Cursino-Santos J.R."/>
            <person name="El-Dorry H."/>
            <person name="Faria J.B."/>
            <person name="Ferreira A.J.S."/>
            <person name="Ferreira R.C.C."/>
            <person name="Ferro M.I.T."/>
            <person name="Formighieri E.F."/>
            <person name="Franco M.C."/>
            <person name="Greggio C.C."/>
            <person name="Gruber A."/>
            <person name="Katsuyama A.M."/>
            <person name="Kishi L.T."/>
            <person name="Leite R.P."/>
            <person name="Lemos E.G.M."/>
            <person name="Lemos M.V.F."/>
            <person name="Locali E.C."/>
            <person name="Machado M.A."/>
            <person name="Madeira A.M.B.N."/>
            <person name="Martinez-Rossi N.M."/>
            <person name="Martins E.C."/>
            <person name="Meidanis J."/>
            <person name="Menck C.F.M."/>
            <person name="Miyaki C.Y."/>
            <person name="Moon D.H."/>
            <person name="Moreira L.M."/>
            <person name="Novo M.T.M."/>
            <person name="Okura V.K."/>
            <person name="Oliveira M.C."/>
            <person name="Oliveira V.R."/>
            <person name="Pereira H.A."/>
            <person name="Rossi A."/>
            <person name="Sena J.A.D."/>
            <person name="Silva C."/>
            <person name="de Souza R.F."/>
            <person name="Spinola L.A.F."/>
            <person name="Takita M.A."/>
            <person name="Tamura R.E."/>
            <person name="Teixeira E.C."/>
            <person name="Tezza R.I.D."/>
            <person name="Trindade dos Santos M."/>
            <person name="Truffi D."/>
            <person name="Tsai S.M."/>
            <person name="White F.F."/>
            <person name="Setubal J.C."/>
            <person name="Kitajima J.P."/>
        </authorList>
    </citation>
    <scope>NUCLEOTIDE SEQUENCE [LARGE SCALE GENOMIC DNA]</scope>
    <source>
        <strain>ATCC 33913 / DSM 3586 / NCPPB 528 / LMG 568 / P 25</strain>
    </source>
</reference>
<sequence length="335" mass="36478">MIQFQRLHKSYTVDGRQIVALHPLDLRIGPGEVFGIIGHSGAGKSTLIRLINRLEEPTGGRLLIGDEDVTALNSTGLRALRRRVGMIFQHFNLLSSRTVAGNVAFPLELAGTPRAEIDARVAELLARVGLEQHATKYPAQLSGGQKQRVGIARALATRPQILLCDEATSALDPQTTASVLQLLAQINRELGLTIVLITHEMEVIRRVCDRVAVLDAGKLVETGPVTEVFLHPQHPTTRRFVSEAEHVDEAELHRDFEAVGGRIVRLTFLGNGTYEPVLGRIARETGVDYNILSGRVDRIKDTPYGQLTVALTGGDQNAARAGFVAAGVHVEDLRV</sequence>
<feature type="chain" id="PRO_0000270440" description="Methionine import ATP-binding protein MetN">
    <location>
        <begin position="1"/>
        <end position="335"/>
    </location>
</feature>
<feature type="domain" description="ABC transporter" evidence="1">
    <location>
        <begin position="2"/>
        <end position="241"/>
    </location>
</feature>
<feature type="binding site" evidence="1">
    <location>
        <begin position="38"/>
        <end position="45"/>
    </location>
    <ligand>
        <name>ATP</name>
        <dbReference type="ChEBI" id="CHEBI:30616"/>
    </ligand>
</feature>